<proteinExistence type="inferred from homology"/>
<gene>
    <name evidence="1" type="primary">Lis-1</name>
    <name type="ORF">GD11168</name>
</gene>
<keyword id="KW-0131">Cell cycle</keyword>
<keyword id="KW-0132">Cell division</keyword>
<keyword id="KW-0175">Coiled coil</keyword>
<keyword id="KW-0963">Cytoplasm</keyword>
<keyword id="KW-0206">Cytoskeleton</keyword>
<keyword id="KW-0493">Microtubule</keyword>
<keyword id="KW-0498">Mitosis</keyword>
<keyword id="KW-1185">Reference proteome</keyword>
<keyword id="KW-0677">Repeat</keyword>
<keyword id="KW-0813">Transport</keyword>
<keyword id="KW-0853">WD repeat</keyword>
<dbReference type="EMBL" id="CM000362">
    <property type="protein sequence ID" value="EDX07311.1"/>
    <property type="molecule type" value="Genomic_DNA"/>
</dbReference>
<dbReference type="SMR" id="B4QHG6"/>
<dbReference type="STRING" id="7240.B4QHG6"/>
<dbReference type="EnsemblMetazoa" id="FBtr0211078">
    <property type="protein sequence ID" value="FBpp0209570"/>
    <property type="gene ID" value="FBgn0182923"/>
</dbReference>
<dbReference type="EnsemblMetazoa" id="FBtr0349986">
    <property type="protein sequence ID" value="FBpp0314781"/>
    <property type="gene ID" value="FBgn0182923"/>
</dbReference>
<dbReference type="EnsemblMetazoa" id="FBtr0352003">
    <property type="protein sequence ID" value="FBpp0316611"/>
    <property type="gene ID" value="FBgn0182923"/>
</dbReference>
<dbReference type="EnsemblMetazoa" id="XM_016168203.3">
    <property type="protein sequence ID" value="XP_016027928.1"/>
    <property type="gene ID" value="LOC6734719"/>
</dbReference>
<dbReference type="EnsemblMetazoa" id="XM_016168204.3">
    <property type="protein sequence ID" value="XP_016027929.1"/>
    <property type="gene ID" value="LOC6734719"/>
</dbReference>
<dbReference type="EnsemblMetazoa" id="XM_016168205.3">
    <property type="protein sequence ID" value="XP_016027930.1"/>
    <property type="gene ID" value="LOC6734719"/>
</dbReference>
<dbReference type="GeneID" id="6734719"/>
<dbReference type="CTD" id="36791"/>
<dbReference type="HOGENOM" id="CLU_000288_57_15_1"/>
<dbReference type="OMA" id="WHVATKE"/>
<dbReference type="OrthoDB" id="674604at2759"/>
<dbReference type="PhylomeDB" id="B4QHG6"/>
<dbReference type="Proteomes" id="UP000000304">
    <property type="component" value="Chromosome 2R"/>
</dbReference>
<dbReference type="Bgee" id="FBgn0182923">
    <property type="expression patterns" value="Expressed in embryo and 3 other cell types or tissues"/>
</dbReference>
<dbReference type="GO" id="GO:1904115">
    <property type="term" value="C:axon cytoplasm"/>
    <property type="evidence" value="ECO:0007669"/>
    <property type="project" value="GOC"/>
</dbReference>
<dbReference type="GO" id="GO:0005938">
    <property type="term" value="C:cell cortex"/>
    <property type="evidence" value="ECO:0007669"/>
    <property type="project" value="EnsemblMetazoa"/>
</dbReference>
<dbReference type="GO" id="GO:0030425">
    <property type="term" value="C:dendrite"/>
    <property type="evidence" value="ECO:0007669"/>
    <property type="project" value="EnsemblMetazoa"/>
</dbReference>
<dbReference type="GO" id="GO:0005869">
    <property type="term" value="C:dynactin complex"/>
    <property type="evidence" value="ECO:0007669"/>
    <property type="project" value="EnsemblMetazoa"/>
</dbReference>
<dbReference type="GO" id="GO:0030286">
    <property type="term" value="C:dynein complex"/>
    <property type="evidence" value="ECO:0007669"/>
    <property type="project" value="EnsemblMetazoa"/>
</dbReference>
<dbReference type="GO" id="GO:0030426">
    <property type="term" value="C:growth cone"/>
    <property type="evidence" value="ECO:0007669"/>
    <property type="project" value="EnsemblMetazoa"/>
</dbReference>
<dbReference type="GO" id="GO:0000776">
    <property type="term" value="C:kinetochore"/>
    <property type="evidence" value="ECO:0007669"/>
    <property type="project" value="EnsemblMetazoa"/>
</dbReference>
<dbReference type="GO" id="GO:0005828">
    <property type="term" value="C:kinetochore microtubule"/>
    <property type="evidence" value="ECO:0007669"/>
    <property type="project" value="EnsemblMetazoa"/>
</dbReference>
<dbReference type="GO" id="GO:0043025">
    <property type="term" value="C:neuronal cell body"/>
    <property type="evidence" value="ECO:0007669"/>
    <property type="project" value="EnsemblMetazoa"/>
</dbReference>
<dbReference type="GO" id="GO:0031616">
    <property type="term" value="C:spindle pole centrosome"/>
    <property type="evidence" value="ECO:0007669"/>
    <property type="project" value="EnsemblMetazoa"/>
</dbReference>
<dbReference type="GO" id="GO:0070840">
    <property type="term" value="F:dynein complex binding"/>
    <property type="evidence" value="ECO:0007669"/>
    <property type="project" value="UniProtKB-UniRule"/>
</dbReference>
<dbReference type="GO" id="GO:0007298">
    <property type="term" value="P:border follicle cell migration"/>
    <property type="evidence" value="ECO:0007669"/>
    <property type="project" value="EnsemblMetazoa"/>
</dbReference>
<dbReference type="GO" id="GO:0051642">
    <property type="term" value="P:centrosome localization"/>
    <property type="evidence" value="ECO:0007669"/>
    <property type="project" value="EnsemblMetazoa"/>
</dbReference>
<dbReference type="GO" id="GO:0051299">
    <property type="term" value="P:centrosome separation"/>
    <property type="evidence" value="ECO:0007669"/>
    <property type="project" value="EnsemblMetazoa"/>
</dbReference>
<dbReference type="GO" id="GO:0030381">
    <property type="term" value="P:chorion-containing eggshell pattern formation"/>
    <property type="evidence" value="ECO:0007669"/>
    <property type="project" value="EnsemblMetazoa"/>
</dbReference>
<dbReference type="GO" id="GO:0061883">
    <property type="term" value="P:clathrin-dependent endocytosis involved in vitellogenesis"/>
    <property type="evidence" value="ECO:0007669"/>
    <property type="project" value="EnsemblMetazoa"/>
</dbReference>
<dbReference type="GO" id="GO:0048813">
    <property type="term" value="P:dendrite morphogenesis"/>
    <property type="evidence" value="ECO:0007669"/>
    <property type="project" value="EnsemblMetazoa"/>
</dbReference>
<dbReference type="GO" id="GO:0000132">
    <property type="term" value="P:establishment of mitotic spindle orientation"/>
    <property type="evidence" value="ECO:0007669"/>
    <property type="project" value="UniProtKB-UniRule"/>
</dbReference>
<dbReference type="GO" id="GO:0048142">
    <property type="term" value="P:germarium-derived cystoblast division"/>
    <property type="evidence" value="ECO:0007669"/>
    <property type="project" value="EnsemblMetazoa"/>
</dbReference>
<dbReference type="GO" id="GO:0007294">
    <property type="term" value="P:germarium-derived oocyte fate determination"/>
    <property type="evidence" value="ECO:0007669"/>
    <property type="project" value="EnsemblMetazoa"/>
</dbReference>
<dbReference type="GO" id="GO:0008298">
    <property type="term" value="P:intracellular mRNA localization"/>
    <property type="evidence" value="ECO:0007669"/>
    <property type="project" value="EnsemblMetazoa"/>
</dbReference>
<dbReference type="GO" id="GO:0006886">
    <property type="term" value="P:intracellular protein transport"/>
    <property type="evidence" value="ECO:0007669"/>
    <property type="project" value="EnsemblMetazoa"/>
</dbReference>
<dbReference type="GO" id="GO:0051383">
    <property type="term" value="P:kinetochore organization"/>
    <property type="evidence" value="ECO:0007669"/>
    <property type="project" value="EnsemblMetazoa"/>
</dbReference>
<dbReference type="GO" id="GO:0051012">
    <property type="term" value="P:microtubule sliding"/>
    <property type="evidence" value="ECO:0007669"/>
    <property type="project" value="UniProtKB-UniRule"/>
</dbReference>
<dbReference type="GO" id="GO:0046716">
    <property type="term" value="P:muscle cell cellular homeostasis"/>
    <property type="evidence" value="ECO:0007669"/>
    <property type="project" value="EnsemblMetazoa"/>
</dbReference>
<dbReference type="GO" id="GO:0016319">
    <property type="term" value="P:mushroom body development"/>
    <property type="evidence" value="ECO:0007669"/>
    <property type="project" value="EnsemblMetazoa"/>
</dbReference>
<dbReference type="GO" id="GO:0007405">
    <property type="term" value="P:neuroblast proliferation"/>
    <property type="evidence" value="ECO:0007669"/>
    <property type="project" value="EnsemblMetazoa"/>
</dbReference>
<dbReference type="GO" id="GO:0030473">
    <property type="term" value="P:nuclear migration along microtubule"/>
    <property type="evidence" value="ECO:0007669"/>
    <property type="project" value="EnsemblMetazoa"/>
</dbReference>
<dbReference type="GO" id="GO:0007312">
    <property type="term" value="P:oocyte nucleus migration involved in oocyte dorsal/ventral axis specification"/>
    <property type="evidence" value="ECO:0007669"/>
    <property type="project" value="EnsemblMetazoa"/>
</dbReference>
<dbReference type="GO" id="GO:0030723">
    <property type="term" value="P:ovarian fusome organization"/>
    <property type="evidence" value="ECO:0007669"/>
    <property type="project" value="EnsemblMetazoa"/>
</dbReference>
<dbReference type="GO" id="GO:0007300">
    <property type="term" value="P:ovarian nurse cell to oocyte transport"/>
    <property type="evidence" value="ECO:0007669"/>
    <property type="project" value="EnsemblMetazoa"/>
</dbReference>
<dbReference type="GO" id="GO:0072499">
    <property type="term" value="P:photoreceptor cell axon guidance"/>
    <property type="evidence" value="ECO:0007669"/>
    <property type="project" value="EnsemblMetazoa"/>
</dbReference>
<dbReference type="GO" id="GO:0050772">
    <property type="term" value="P:positive regulation of axonogenesis"/>
    <property type="evidence" value="ECO:0007669"/>
    <property type="project" value="EnsemblMetazoa"/>
</dbReference>
<dbReference type="GO" id="GO:0030513">
    <property type="term" value="P:positive regulation of BMP signaling pathway"/>
    <property type="evidence" value="ECO:0007669"/>
    <property type="project" value="EnsemblMetazoa"/>
</dbReference>
<dbReference type="GO" id="GO:0045842">
    <property type="term" value="P:positive regulation of mitotic metaphase/anaphase transition"/>
    <property type="evidence" value="ECO:0007669"/>
    <property type="project" value="EnsemblMetazoa"/>
</dbReference>
<dbReference type="GO" id="GO:0034501">
    <property type="term" value="P:protein localization to kinetochore"/>
    <property type="evidence" value="ECO:0007669"/>
    <property type="project" value="EnsemblMetazoa"/>
</dbReference>
<dbReference type="GO" id="GO:0048814">
    <property type="term" value="P:regulation of dendrite morphogenesis"/>
    <property type="evidence" value="ECO:0007669"/>
    <property type="project" value="EnsemblMetazoa"/>
</dbReference>
<dbReference type="GO" id="GO:0008090">
    <property type="term" value="P:retrograde axonal transport"/>
    <property type="evidence" value="ECO:0007669"/>
    <property type="project" value="EnsemblMetazoa"/>
</dbReference>
<dbReference type="GO" id="GO:0042052">
    <property type="term" value="P:rhabdomere development"/>
    <property type="evidence" value="ECO:0007669"/>
    <property type="project" value="EnsemblMetazoa"/>
</dbReference>
<dbReference type="GO" id="GO:0007283">
    <property type="term" value="P:spermatogenesis"/>
    <property type="evidence" value="ECO:0007669"/>
    <property type="project" value="EnsemblMetazoa"/>
</dbReference>
<dbReference type="GO" id="GO:0051225">
    <property type="term" value="P:spindle assembly"/>
    <property type="evidence" value="ECO:0007669"/>
    <property type="project" value="EnsemblMetazoa"/>
</dbReference>
<dbReference type="GO" id="GO:0019827">
    <property type="term" value="P:stem cell population maintenance"/>
    <property type="evidence" value="ECO:0007669"/>
    <property type="project" value="EnsemblMetazoa"/>
</dbReference>
<dbReference type="CDD" id="cd00200">
    <property type="entry name" value="WD40"/>
    <property type="match status" value="1"/>
</dbReference>
<dbReference type="FunFam" id="2.130.10.10:FF:000038">
    <property type="entry name" value="Lissencephaly-1 homolog B"/>
    <property type="match status" value="1"/>
</dbReference>
<dbReference type="FunFam" id="1.20.960.30:FF:000002">
    <property type="entry name" value="Platelet-activating factor acetylhydrolase ib"/>
    <property type="match status" value="1"/>
</dbReference>
<dbReference type="Gene3D" id="1.20.960.30">
    <property type="match status" value="1"/>
</dbReference>
<dbReference type="Gene3D" id="2.130.10.10">
    <property type="entry name" value="YVTN repeat-like/Quinoprotein amine dehydrogenase"/>
    <property type="match status" value="1"/>
</dbReference>
<dbReference type="HAMAP" id="MF_03141">
    <property type="entry name" value="lis1"/>
    <property type="match status" value="1"/>
</dbReference>
<dbReference type="InterPro" id="IPR017252">
    <property type="entry name" value="Dynein_regulator_LIS1"/>
</dbReference>
<dbReference type="InterPro" id="IPR020472">
    <property type="entry name" value="G-protein_beta_WD-40_rep"/>
</dbReference>
<dbReference type="InterPro" id="IPR037190">
    <property type="entry name" value="LIS1_N"/>
</dbReference>
<dbReference type="InterPro" id="IPR006594">
    <property type="entry name" value="LisH"/>
</dbReference>
<dbReference type="InterPro" id="IPR056795">
    <property type="entry name" value="PAC1-like_LisH-like_dom"/>
</dbReference>
<dbReference type="InterPro" id="IPR015943">
    <property type="entry name" value="WD40/YVTN_repeat-like_dom_sf"/>
</dbReference>
<dbReference type="InterPro" id="IPR019775">
    <property type="entry name" value="WD40_repeat_CS"/>
</dbReference>
<dbReference type="InterPro" id="IPR036322">
    <property type="entry name" value="WD40_repeat_dom_sf"/>
</dbReference>
<dbReference type="InterPro" id="IPR001680">
    <property type="entry name" value="WD40_rpt"/>
</dbReference>
<dbReference type="InterPro" id="IPR050349">
    <property type="entry name" value="WD_LIS1/nudF_dynein_reg"/>
</dbReference>
<dbReference type="PANTHER" id="PTHR44129">
    <property type="entry name" value="WD REPEAT-CONTAINING PROTEIN POP1"/>
    <property type="match status" value="1"/>
</dbReference>
<dbReference type="Pfam" id="PF24951">
    <property type="entry name" value="LisH_PAC1"/>
    <property type="match status" value="1"/>
</dbReference>
<dbReference type="Pfam" id="PF00400">
    <property type="entry name" value="WD40"/>
    <property type="match status" value="7"/>
</dbReference>
<dbReference type="PIRSF" id="PIRSF037647">
    <property type="entry name" value="Dynein_regulator_Lis1"/>
    <property type="match status" value="1"/>
</dbReference>
<dbReference type="PRINTS" id="PR00320">
    <property type="entry name" value="GPROTEINBRPT"/>
</dbReference>
<dbReference type="SMART" id="SM00667">
    <property type="entry name" value="LisH"/>
    <property type="match status" value="1"/>
</dbReference>
<dbReference type="SMART" id="SM00320">
    <property type="entry name" value="WD40"/>
    <property type="match status" value="7"/>
</dbReference>
<dbReference type="SUPFAM" id="SSF109925">
    <property type="entry name" value="Lissencephaly-1 protein (Lis-1, PAF-AH alpha) N-terminal domain"/>
    <property type="match status" value="1"/>
</dbReference>
<dbReference type="SUPFAM" id="SSF50978">
    <property type="entry name" value="WD40 repeat-like"/>
    <property type="match status" value="1"/>
</dbReference>
<dbReference type="PROSITE" id="PS50896">
    <property type="entry name" value="LISH"/>
    <property type="match status" value="1"/>
</dbReference>
<dbReference type="PROSITE" id="PS00678">
    <property type="entry name" value="WD_REPEATS_1"/>
    <property type="match status" value="6"/>
</dbReference>
<dbReference type="PROSITE" id="PS50082">
    <property type="entry name" value="WD_REPEATS_2"/>
    <property type="match status" value="7"/>
</dbReference>
<dbReference type="PROSITE" id="PS50294">
    <property type="entry name" value="WD_REPEATS_REGION"/>
    <property type="match status" value="1"/>
</dbReference>
<feature type="chain" id="PRO_0000405047" description="Lissencephaly-1 homolog">
    <location>
        <begin position="1"/>
        <end position="411"/>
    </location>
</feature>
<feature type="domain" description="LisH" evidence="1">
    <location>
        <begin position="9"/>
        <end position="41"/>
    </location>
</feature>
<feature type="repeat" description="WD 1">
    <location>
        <begin position="106"/>
        <end position="147"/>
    </location>
</feature>
<feature type="repeat" description="WD 2">
    <location>
        <begin position="148"/>
        <end position="187"/>
    </location>
</feature>
<feature type="repeat" description="WD 3">
    <location>
        <begin position="191"/>
        <end position="230"/>
    </location>
</feature>
<feature type="repeat" description="WD 4">
    <location>
        <begin position="233"/>
        <end position="272"/>
    </location>
</feature>
<feature type="repeat" description="WD 5">
    <location>
        <begin position="275"/>
        <end position="334"/>
    </location>
</feature>
<feature type="repeat" description="WD 6">
    <location>
        <begin position="337"/>
        <end position="376"/>
    </location>
</feature>
<feature type="repeat" description="WD 7">
    <location>
        <begin position="379"/>
        <end position="411"/>
    </location>
</feature>
<feature type="coiled-coil region" evidence="1">
    <location>
        <begin position="56"/>
        <end position="83"/>
    </location>
</feature>
<evidence type="ECO:0000255" key="1">
    <source>
        <dbReference type="HAMAP-Rule" id="MF_03141"/>
    </source>
</evidence>
<comment type="function">
    <text evidence="1">Positively regulates the activity of the minus-end directed microtubule motor protein dynein. May enhance dynein-mediated microtubule sliding by targeting dynein to the microtubule plus end. Required for several dynein- and microtubule-dependent processes.</text>
</comment>
<comment type="subcellular location">
    <subcellularLocation>
        <location evidence="1">Cytoplasm</location>
        <location evidence="1">Cytoskeleton</location>
    </subcellularLocation>
    <subcellularLocation>
        <location evidence="1">Cytoplasm</location>
        <location evidence="1">Cytoskeleton</location>
        <location evidence="1">Microtubule organizing center</location>
        <location evidence="1">Centrosome</location>
    </subcellularLocation>
    <text evidence="1">Localizes to the plus end of microtubules and to the centrosome.</text>
</comment>
<comment type="domain">
    <text evidence="1">Dimerization mediated by the LisH domain may be required to activate dynein.</text>
</comment>
<comment type="similarity">
    <text evidence="1">Belongs to the WD repeat LIS1/nudF family.</text>
</comment>
<reference key="1">
    <citation type="journal article" date="2007" name="Nature">
        <title>Evolution of genes and genomes on the Drosophila phylogeny.</title>
        <authorList>
            <consortium name="Drosophila 12 genomes consortium"/>
        </authorList>
    </citation>
    <scope>NUCLEOTIDE SEQUENCE [LARGE SCALE GENOMIC DNA]</scope>
</reference>
<protein>
    <recommendedName>
        <fullName evidence="1">Lissencephaly-1 homolog</fullName>
    </recommendedName>
</protein>
<sequence>MKMVLSQRQREELNQAIADYLGSNGYADSLETFRKEADLSTEVEKKFGGLLEKKWTSVIRLQKKVMELEAKLTEAEKEVIEGAPTKNKRTPGEWIPRPPEKFSLTGHRASITRVIFHPIFALMVSASEDATIRIWDFETGEYERSLKGHTDSVQDVAFDAQGKLLASCSADLSIKLWDFQQSYECIKTMHGHDHNVSSVAFVPAGDYVLSASRDRTIKMWEVATGYCVKTYTGHREWVRMVRVHIEGSIFATCSNDQTIRVWLTNSKDCKVELRDHEHTVECIAWAPEAAASAINEAAGADNKKGHHQGPFLASGSRDKTIRIWDVSVGLCLLTLSGHDNWVRGLAFHPGGKYLVSASDDKTIRVWDLRNKRCMKTLYAHQHFCTSIDFHKAHPYVISGSVDQTVKVWECR</sequence>
<organism>
    <name type="scientific">Drosophila simulans</name>
    <name type="common">Fruit fly</name>
    <dbReference type="NCBI Taxonomy" id="7240"/>
    <lineage>
        <taxon>Eukaryota</taxon>
        <taxon>Metazoa</taxon>
        <taxon>Ecdysozoa</taxon>
        <taxon>Arthropoda</taxon>
        <taxon>Hexapoda</taxon>
        <taxon>Insecta</taxon>
        <taxon>Pterygota</taxon>
        <taxon>Neoptera</taxon>
        <taxon>Endopterygota</taxon>
        <taxon>Diptera</taxon>
        <taxon>Brachycera</taxon>
        <taxon>Muscomorpha</taxon>
        <taxon>Ephydroidea</taxon>
        <taxon>Drosophilidae</taxon>
        <taxon>Drosophila</taxon>
        <taxon>Sophophora</taxon>
    </lineage>
</organism>
<name>LIS1_DROSI</name>
<accession>B4QHG6</accession>